<comment type="function">
    <text evidence="1">The key enzymatic reactions in nitrogen fixation are catalyzed by the nitrogenase complex, which has 2 components: the iron protein and the molybdenum-iron protein.</text>
</comment>
<comment type="catalytic activity">
    <reaction evidence="1">
        <text>N2 + 8 reduced [2Fe-2S]-[ferredoxin] + 16 ATP + 16 H2O = H2 + 8 oxidized [2Fe-2S]-[ferredoxin] + 2 NH4(+) + 16 ADP + 16 phosphate + 6 H(+)</text>
        <dbReference type="Rhea" id="RHEA:21448"/>
        <dbReference type="Rhea" id="RHEA-COMP:10000"/>
        <dbReference type="Rhea" id="RHEA-COMP:10001"/>
        <dbReference type="ChEBI" id="CHEBI:15377"/>
        <dbReference type="ChEBI" id="CHEBI:15378"/>
        <dbReference type="ChEBI" id="CHEBI:17997"/>
        <dbReference type="ChEBI" id="CHEBI:18276"/>
        <dbReference type="ChEBI" id="CHEBI:28938"/>
        <dbReference type="ChEBI" id="CHEBI:30616"/>
        <dbReference type="ChEBI" id="CHEBI:33737"/>
        <dbReference type="ChEBI" id="CHEBI:33738"/>
        <dbReference type="ChEBI" id="CHEBI:43474"/>
        <dbReference type="ChEBI" id="CHEBI:456216"/>
        <dbReference type="EC" id="1.18.6.1"/>
    </reaction>
</comment>
<comment type="cofactor">
    <cofactor evidence="1">
        <name>[4Fe-4S] cluster</name>
        <dbReference type="ChEBI" id="CHEBI:49883"/>
    </cofactor>
    <text evidence="1">Binds 1 [4Fe-4S] cluster per dimer.</text>
</comment>
<comment type="subunit">
    <text evidence="1">Homodimer.</text>
</comment>
<comment type="PTM">
    <text evidence="1">The reversible ADP-ribosylation of Arg-97 inactivates the nitrogenase reductase and regulates nitrogenase activity.</text>
</comment>
<comment type="similarity">
    <text evidence="1">Belongs to the NifH/BchL/ChlL family.</text>
</comment>
<feature type="chain" id="PRO_1000211856" description="Nitrogenase iron protein">
    <location>
        <begin position="1"/>
        <end position="274"/>
    </location>
</feature>
<feature type="binding site" evidence="1">
    <location>
        <begin position="8"/>
        <end position="15"/>
    </location>
    <ligand>
        <name>ATP</name>
        <dbReference type="ChEBI" id="CHEBI:30616"/>
    </ligand>
</feature>
<feature type="binding site" evidence="1">
    <location>
        <position position="94"/>
    </location>
    <ligand>
        <name>[4Fe-4S] cluster</name>
        <dbReference type="ChEBI" id="CHEBI:49883"/>
        <note>ligand shared between dimeric partners</note>
    </ligand>
</feature>
<feature type="binding site" evidence="1">
    <location>
        <position position="131"/>
    </location>
    <ligand>
        <name>[4Fe-4S] cluster</name>
        <dbReference type="ChEBI" id="CHEBI:49883"/>
        <note>ligand shared between dimeric partners</note>
    </ligand>
</feature>
<feature type="modified residue" description="ADP-ribosylarginine; by dinitrogenase reductase ADP-ribosyltransferase" evidence="1">
    <location>
        <position position="97"/>
    </location>
</feature>
<organism>
    <name type="scientific">Chlorobaculum parvum (strain DSM 263 / NCIMB 8327)</name>
    <name type="common">Chlorobium vibrioforme subsp. thiosulfatophilum</name>
    <dbReference type="NCBI Taxonomy" id="517417"/>
    <lineage>
        <taxon>Bacteria</taxon>
        <taxon>Pseudomonadati</taxon>
        <taxon>Chlorobiota</taxon>
        <taxon>Chlorobiia</taxon>
        <taxon>Chlorobiales</taxon>
        <taxon>Chlorobiaceae</taxon>
        <taxon>Chlorobaculum</taxon>
    </lineage>
</organism>
<gene>
    <name evidence="1" type="primary">nifH</name>
    <name type="ordered locus">Cpar_1619</name>
</gene>
<name>NIFH_CHLP8</name>
<dbReference type="EC" id="1.18.6.1" evidence="1"/>
<dbReference type="EMBL" id="CP001099">
    <property type="protein sequence ID" value="ACF12015.1"/>
    <property type="molecule type" value="Genomic_DNA"/>
</dbReference>
<dbReference type="RefSeq" id="WP_012502848.1">
    <property type="nucleotide sequence ID" value="NC_011027.1"/>
</dbReference>
<dbReference type="SMR" id="B3QQ12"/>
<dbReference type="STRING" id="517417.Cpar_1619"/>
<dbReference type="KEGG" id="cpc:Cpar_1619"/>
<dbReference type="eggNOG" id="COG1348">
    <property type="taxonomic scope" value="Bacteria"/>
</dbReference>
<dbReference type="HOGENOM" id="CLU_059373_0_0_10"/>
<dbReference type="OrthoDB" id="9778641at2"/>
<dbReference type="Proteomes" id="UP000008811">
    <property type="component" value="Chromosome"/>
</dbReference>
<dbReference type="GO" id="GO:0051539">
    <property type="term" value="F:4 iron, 4 sulfur cluster binding"/>
    <property type="evidence" value="ECO:0007669"/>
    <property type="project" value="UniProtKB-KW"/>
</dbReference>
<dbReference type="GO" id="GO:0005524">
    <property type="term" value="F:ATP binding"/>
    <property type="evidence" value="ECO:0007669"/>
    <property type="project" value="UniProtKB-UniRule"/>
</dbReference>
<dbReference type="GO" id="GO:0046872">
    <property type="term" value="F:metal ion binding"/>
    <property type="evidence" value="ECO:0007669"/>
    <property type="project" value="UniProtKB-KW"/>
</dbReference>
<dbReference type="GO" id="GO:0016163">
    <property type="term" value="F:nitrogenase activity"/>
    <property type="evidence" value="ECO:0007669"/>
    <property type="project" value="UniProtKB-UniRule"/>
</dbReference>
<dbReference type="GO" id="GO:0009399">
    <property type="term" value="P:nitrogen fixation"/>
    <property type="evidence" value="ECO:0007669"/>
    <property type="project" value="UniProtKB-UniRule"/>
</dbReference>
<dbReference type="CDD" id="cd02040">
    <property type="entry name" value="NifH"/>
    <property type="match status" value="1"/>
</dbReference>
<dbReference type="Gene3D" id="3.40.50.300">
    <property type="entry name" value="P-loop containing nucleotide triphosphate hydrolases"/>
    <property type="match status" value="1"/>
</dbReference>
<dbReference type="HAMAP" id="MF_00533">
    <property type="entry name" value="NifH"/>
    <property type="match status" value="1"/>
</dbReference>
<dbReference type="InterPro" id="IPR030655">
    <property type="entry name" value="NifH/chlL_CS"/>
</dbReference>
<dbReference type="InterPro" id="IPR000392">
    <property type="entry name" value="NifH/frxC"/>
</dbReference>
<dbReference type="InterPro" id="IPR005977">
    <property type="entry name" value="Nitrogenase_Fe_NifH"/>
</dbReference>
<dbReference type="InterPro" id="IPR027417">
    <property type="entry name" value="P-loop_NTPase"/>
</dbReference>
<dbReference type="NCBIfam" id="TIGR01287">
    <property type="entry name" value="nifH"/>
    <property type="match status" value="1"/>
</dbReference>
<dbReference type="PANTHER" id="PTHR42864">
    <property type="entry name" value="LIGHT-INDEPENDENT PROTOCHLOROPHYLLIDE REDUCTASE IRON-SULFUR ATP-BINDING PROTEIN"/>
    <property type="match status" value="1"/>
</dbReference>
<dbReference type="PANTHER" id="PTHR42864:SF2">
    <property type="entry name" value="LIGHT-INDEPENDENT PROTOCHLOROPHYLLIDE REDUCTASE IRON-SULFUR ATP-BINDING PROTEIN"/>
    <property type="match status" value="1"/>
</dbReference>
<dbReference type="Pfam" id="PF00142">
    <property type="entry name" value="Fer4_NifH"/>
    <property type="match status" value="1"/>
</dbReference>
<dbReference type="PIRSF" id="PIRSF000363">
    <property type="entry name" value="Nitrogenase_iron"/>
    <property type="match status" value="1"/>
</dbReference>
<dbReference type="PRINTS" id="PR00091">
    <property type="entry name" value="NITROGNASEII"/>
</dbReference>
<dbReference type="SUPFAM" id="SSF52540">
    <property type="entry name" value="P-loop containing nucleoside triphosphate hydrolases"/>
    <property type="match status" value="1"/>
</dbReference>
<dbReference type="PROSITE" id="PS00746">
    <property type="entry name" value="NIFH_FRXC_1"/>
    <property type="match status" value="1"/>
</dbReference>
<dbReference type="PROSITE" id="PS00692">
    <property type="entry name" value="NIFH_FRXC_2"/>
    <property type="match status" value="1"/>
</dbReference>
<dbReference type="PROSITE" id="PS51026">
    <property type="entry name" value="NIFH_FRXC_3"/>
    <property type="match status" value="1"/>
</dbReference>
<sequence length="274" mass="30090">MRKVAIYGKGGIGKSTTTQNTVAGLAEAGKKVMVVGCDPKADSTRLLLGGLQQKTVLDTLREEGEEVELEDIIKEGYKGSRCTESGGPEPGVGCAGRGIITSVNLLEQLGAYDDEWNLDYVFYDVLGDVVCGGFAMPIRDGKAEEIYIVCSGEMMAMYAANNICKGILKYADAGGVRLGGLICNSRKVDNEREMIEELARRIGTQMIHFVPRDNFVQRAEINRKTVIDYDPTHPQADEYRALARKIDENKMFVIPKPLEIDELESLLIEFGIAN</sequence>
<keyword id="KW-0004">4Fe-4S</keyword>
<keyword id="KW-0013">ADP-ribosylation</keyword>
<keyword id="KW-0067">ATP-binding</keyword>
<keyword id="KW-0408">Iron</keyword>
<keyword id="KW-0411">Iron-sulfur</keyword>
<keyword id="KW-0479">Metal-binding</keyword>
<keyword id="KW-0535">Nitrogen fixation</keyword>
<keyword id="KW-0547">Nucleotide-binding</keyword>
<keyword id="KW-0560">Oxidoreductase</keyword>
<accession>B3QQ12</accession>
<evidence type="ECO:0000255" key="1">
    <source>
        <dbReference type="HAMAP-Rule" id="MF_00533"/>
    </source>
</evidence>
<protein>
    <recommendedName>
        <fullName evidence="1">Nitrogenase iron protein</fullName>
        <ecNumber evidence="1">1.18.6.1</ecNumber>
    </recommendedName>
    <alternativeName>
        <fullName evidence="1">Nitrogenase Fe protein</fullName>
    </alternativeName>
    <alternativeName>
        <fullName evidence="1">Nitrogenase component II</fullName>
    </alternativeName>
    <alternativeName>
        <fullName evidence="1">Nitrogenase reductase</fullName>
    </alternativeName>
</protein>
<reference key="1">
    <citation type="submission" date="2008-06" db="EMBL/GenBank/DDBJ databases">
        <title>Complete sequence of Chlorobaculum parvum NCIB 8327.</title>
        <authorList>
            <consortium name="US DOE Joint Genome Institute"/>
            <person name="Lucas S."/>
            <person name="Copeland A."/>
            <person name="Lapidus A."/>
            <person name="Glavina del Rio T."/>
            <person name="Dalin E."/>
            <person name="Tice H."/>
            <person name="Bruce D."/>
            <person name="Goodwin L."/>
            <person name="Pitluck S."/>
            <person name="Schmutz J."/>
            <person name="Larimer F."/>
            <person name="Land M."/>
            <person name="Hauser L."/>
            <person name="Kyrpides N."/>
            <person name="Mikhailova N."/>
            <person name="Zhao F."/>
            <person name="Li T."/>
            <person name="Liu Z."/>
            <person name="Overmann J."/>
            <person name="Bryant D.A."/>
            <person name="Richardson P."/>
        </authorList>
    </citation>
    <scope>NUCLEOTIDE SEQUENCE [LARGE SCALE GENOMIC DNA]</scope>
    <source>
        <strain>DSM 263 / NCIMB 8327</strain>
    </source>
</reference>
<proteinExistence type="inferred from homology"/>